<reference evidence="2" key="1">
    <citation type="journal article" date="2001" name="Rapid Commun. Mass Spectrom.">
        <title>Bioactive dahlein peptides from the skin secretions of the Australian aquatic frog Litoria dahlii: sequence determination by electrospray mass spectrometry.</title>
        <authorList>
            <person name="Wegener K.L."/>
            <person name="Brinkworth C.S."/>
            <person name="Bowie J.H."/>
            <person name="Wallace J.C."/>
            <person name="Tyler M.J."/>
        </authorList>
    </citation>
    <scope>PROTEIN SEQUENCE</scope>
    <scope>FUNCTION</scope>
    <scope>SUBCELLULAR LOCATION</scope>
    <scope>TISSUE SPECIFICITY</scope>
    <scope>MASS SPECTROMETRY</scope>
    <source>
        <tissue evidence="1">Skin secretion</tissue>
    </source>
</reference>
<comment type="function">
    <text evidence="1">Has no antimicrobial activity. Strongly inhibits the formation of NO by neuronal nitric oxide synthase at micromolar concentrations.</text>
</comment>
<comment type="subcellular location">
    <subcellularLocation>
        <location evidence="1">Secreted</location>
    </subcellularLocation>
</comment>
<comment type="tissue specificity">
    <text evidence="1">Expressed by the skin dorsal glands.</text>
</comment>
<comment type="mass spectrometry"/>
<evidence type="ECO:0000269" key="1">
    <source>
    </source>
</evidence>
<evidence type="ECO:0000305" key="2"/>
<protein>
    <recommendedName>
        <fullName>Dahlein-5.5</fullName>
    </recommendedName>
</protein>
<accession>P84271</accession>
<organism>
    <name type="scientific">Ranoidea dahlii</name>
    <name type="common">Dahl's aquatic frog</name>
    <name type="synonym">Litoria dahlii</name>
    <dbReference type="NCBI Taxonomy" id="299727"/>
    <lineage>
        <taxon>Eukaryota</taxon>
        <taxon>Metazoa</taxon>
        <taxon>Chordata</taxon>
        <taxon>Craniata</taxon>
        <taxon>Vertebrata</taxon>
        <taxon>Euteleostomi</taxon>
        <taxon>Amphibia</taxon>
        <taxon>Batrachia</taxon>
        <taxon>Anura</taxon>
        <taxon>Neobatrachia</taxon>
        <taxon>Hyloidea</taxon>
        <taxon>Hylidae</taxon>
        <taxon>Pelodryadinae</taxon>
        <taxon>Ranoidea</taxon>
    </lineage>
</organism>
<feature type="peptide" id="PRO_0000043781" description="Dahlein-5.5">
    <location>
        <begin position="1"/>
        <end position="21"/>
    </location>
</feature>
<dbReference type="GO" id="GO:0005576">
    <property type="term" value="C:extracellular region"/>
    <property type="evidence" value="ECO:0000314"/>
    <property type="project" value="UniProtKB"/>
</dbReference>
<dbReference type="GO" id="GO:0030235">
    <property type="term" value="F:nitric-oxide synthase regulator activity"/>
    <property type="evidence" value="ECO:0000314"/>
    <property type="project" value="UniProtKB"/>
</dbReference>
<dbReference type="GO" id="GO:0006952">
    <property type="term" value="P:defense response"/>
    <property type="evidence" value="ECO:0007669"/>
    <property type="project" value="UniProtKB-KW"/>
</dbReference>
<dbReference type="GO" id="GO:0051001">
    <property type="term" value="P:negative regulation of nitric-oxide synthase activity"/>
    <property type="evidence" value="ECO:0000314"/>
    <property type="project" value="UniProtKB"/>
</dbReference>
<sequence>GLLASLGKVLGGYLAEKLKPK</sequence>
<keyword id="KW-0878">Amphibian defense peptide</keyword>
<keyword id="KW-0903">Direct protein sequencing</keyword>
<keyword id="KW-0964">Secreted</keyword>
<name>DAH55_RANDH</name>
<proteinExistence type="evidence at protein level"/>